<organism>
    <name type="scientific">Cereibacter sphaeroides (strain ATCC 17025 / ATH 2.4.3)</name>
    <name type="common">Rhodobacter sphaeroides</name>
    <dbReference type="NCBI Taxonomy" id="349102"/>
    <lineage>
        <taxon>Bacteria</taxon>
        <taxon>Pseudomonadati</taxon>
        <taxon>Pseudomonadota</taxon>
        <taxon>Alphaproteobacteria</taxon>
        <taxon>Rhodobacterales</taxon>
        <taxon>Paracoccaceae</taxon>
        <taxon>Cereibacter</taxon>
    </lineage>
</organism>
<protein>
    <recommendedName>
        <fullName evidence="1">Glutamyl-tRNA(Gln) amidotransferase subunit A</fullName>
        <shortName evidence="1">Glu-ADT subunit A</shortName>
        <ecNumber evidence="1">6.3.5.7</ecNumber>
    </recommendedName>
</protein>
<reference key="1">
    <citation type="submission" date="2007-04" db="EMBL/GenBank/DDBJ databases">
        <title>Complete sequence of chromosome of Rhodobacter sphaeroides ATCC 17025.</title>
        <authorList>
            <consortium name="US DOE Joint Genome Institute"/>
            <person name="Copeland A."/>
            <person name="Lucas S."/>
            <person name="Lapidus A."/>
            <person name="Barry K."/>
            <person name="Detter J.C."/>
            <person name="Glavina del Rio T."/>
            <person name="Hammon N."/>
            <person name="Israni S."/>
            <person name="Dalin E."/>
            <person name="Tice H."/>
            <person name="Pitluck S."/>
            <person name="Chertkov O."/>
            <person name="Brettin T."/>
            <person name="Bruce D."/>
            <person name="Han C."/>
            <person name="Schmutz J."/>
            <person name="Larimer F."/>
            <person name="Land M."/>
            <person name="Hauser L."/>
            <person name="Kyrpides N."/>
            <person name="Kim E."/>
            <person name="Richardson P."/>
            <person name="Mackenzie C."/>
            <person name="Choudhary M."/>
            <person name="Donohue T.J."/>
            <person name="Kaplan S."/>
        </authorList>
    </citation>
    <scope>NUCLEOTIDE SEQUENCE [LARGE SCALE GENOMIC DNA]</scope>
    <source>
        <strain>ATCC 17025 / ATH 2.4.3</strain>
    </source>
</reference>
<comment type="function">
    <text evidence="1">Allows the formation of correctly charged Gln-tRNA(Gln) through the transamidation of misacylated Glu-tRNA(Gln) in organisms which lack glutaminyl-tRNA synthetase. The reaction takes place in the presence of glutamine and ATP through an activated gamma-phospho-Glu-tRNA(Gln).</text>
</comment>
<comment type="catalytic activity">
    <reaction evidence="1">
        <text>L-glutamyl-tRNA(Gln) + L-glutamine + ATP + H2O = L-glutaminyl-tRNA(Gln) + L-glutamate + ADP + phosphate + H(+)</text>
        <dbReference type="Rhea" id="RHEA:17521"/>
        <dbReference type="Rhea" id="RHEA-COMP:9681"/>
        <dbReference type="Rhea" id="RHEA-COMP:9684"/>
        <dbReference type="ChEBI" id="CHEBI:15377"/>
        <dbReference type="ChEBI" id="CHEBI:15378"/>
        <dbReference type="ChEBI" id="CHEBI:29985"/>
        <dbReference type="ChEBI" id="CHEBI:30616"/>
        <dbReference type="ChEBI" id="CHEBI:43474"/>
        <dbReference type="ChEBI" id="CHEBI:58359"/>
        <dbReference type="ChEBI" id="CHEBI:78520"/>
        <dbReference type="ChEBI" id="CHEBI:78521"/>
        <dbReference type="ChEBI" id="CHEBI:456216"/>
        <dbReference type="EC" id="6.3.5.7"/>
    </reaction>
</comment>
<comment type="subunit">
    <text evidence="1">Heterotrimer of A, B and C subunits.</text>
</comment>
<comment type="similarity">
    <text evidence="1">Belongs to the amidase family. GatA subfamily.</text>
</comment>
<feature type="chain" id="PRO_1000015896" description="Glutamyl-tRNA(Gln) amidotransferase subunit A">
    <location>
        <begin position="1"/>
        <end position="491"/>
    </location>
</feature>
<feature type="active site" description="Charge relay system" evidence="1">
    <location>
        <position position="76"/>
    </location>
</feature>
<feature type="active site" description="Charge relay system" evidence="1">
    <location>
        <position position="154"/>
    </location>
</feature>
<feature type="active site" description="Acyl-ester intermediate" evidence="1">
    <location>
        <position position="178"/>
    </location>
</feature>
<evidence type="ECO:0000255" key="1">
    <source>
        <dbReference type="HAMAP-Rule" id="MF_00120"/>
    </source>
</evidence>
<keyword id="KW-0067">ATP-binding</keyword>
<keyword id="KW-0436">Ligase</keyword>
<keyword id="KW-0547">Nucleotide-binding</keyword>
<keyword id="KW-0648">Protein biosynthesis</keyword>
<accession>A4WUQ2</accession>
<proteinExistence type="inferred from homology"/>
<gene>
    <name evidence="1" type="primary">gatA</name>
    <name type="ordered locus">Rsph17025_2226</name>
</gene>
<sequence>MNANELTIAEARDALAKGELSAVDLTMACLTAIDAGTPLNAFVHLTPEIALDQARASDARRGEGAGALNGIPLGIKDLFCTRGVASQAASNILKGFKPEYESTVTSKLFAAGAVMLGKLNMDEFAMGSSNETSCYGDAVNPWKVDDRKLTPGGSSGGSAAAVAADLCLGATGTDTGGSIRQPAAFTGIVGIKPTYGRVSRWGIVAFASSLDQAGPMTKTVRDAAILLGAMAGHDPKDSTSADIPVPDFEAALTGDIRGKKIGIPREYRMEGMPAEIEALWAKGREMLADAGAEIVDISLPHTKYALPAYYVIAPAEASSNLARYDGVRYGHRAKLGQGDGIVDMYEKTRAEGFGKEVQRRVMIGTYVLSAGFYDAYYNRARKVRALIKRDFDQVFAEGIDAILTPATPSSAFGLGEMAHADPVEMYLNDVFTVTVNLAGLPGISVPVGLDAKGLPLGLQLIGRPWDEAGLLNHAHVLEQAAGFVEKPRKWW</sequence>
<name>GATA_CERS5</name>
<dbReference type="EC" id="6.3.5.7" evidence="1"/>
<dbReference type="EMBL" id="CP000661">
    <property type="protein sequence ID" value="ABP71116.1"/>
    <property type="molecule type" value="Genomic_DNA"/>
</dbReference>
<dbReference type="SMR" id="A4WUQ2"/>
<dbReference type="STRING" id="349102.Rsph17025_2226"/>
<dbReference type="KEGG" id="rsq:Rsph17025_2226"/>
<dbReference type="eggNOG" id="COG0154">
    <property type="taxonomic scope" value="Bacteria"/>
</dbReference>
<dbReference type="HOGENOM" id="CLU_009600_0_3_5"/>
<dbReference type="BioCyc" id="RSPH349102:G1G8M-2295-MONOMER"/>
<dbReference type="GO" id="GO:0030956">
    <property type="term" value="C:glutamyl-tRNA(Gln) amidotransferase complex"/>
    <property type="evidence" value="ECO:0007669"/>
    <property type="project" value="InterPro"/>
</dbReference>
<dbReference type="GO" id="GO:0005524">
    <property type="term" value="F:ATP binding"/>
    <property type="evidence" value="ECO:0007669"/>
    <property type="project" value="UniProtKB-KW"/>
</dbReference>
<dbReference type="GO" id="GO:0050567">
    <property type="term" value="F:glutaminyl-tRNA synthase (glutamine-hydrolyzing) activity"/>
    <property type="evidence" value="ECO:0007669"/>
    <property type="project" value="UniProtKB-UniRule"/>
</dbReference>
<dbReference type="GO" id="GO:0006412">
    <property type="term" value="P:translation"/>
    <property type="evidence" value="ECO:0007669"/>
    <property type="project" value="UniProtKB-UniRule"/>
</dbReference>
<dbReference type="Gene3D" id="3.90.1300.10">
    <property type="entry name" value="Amidase signature (AS) domain"/>
    <property type="match status" value="1"/>
</dbReference>
<dbReference type="HAMAP" id="MF_00120">
    <property type="entry name" value="GatA"/>
    <property type="match status" value="1"/>
</dbReference>
<dbReference type="InterPro" id="IPR000120">
    <property type="entry name" value="Amidase"/>
</dbReference>
<dbReference type="InterPro" id="IPR020556">
    <property type="entry name" value="Amidase_CS"/>
</dbReference>
<dbReference type="InterPro" id="IPR023631">
    <property type="entry name" value="Amidase_dom"/>
</dbReference>
<dbReference type="InterPro" id="IPR036928">
    <property type="entry name" value="AS_sf"/>
</dbReference>
<dbReference type="InterPro" id="IPR004412">
    <property type="entry name" value="GatA"/>
</dbReference>
<dbReference type="NCBIfam" id="TIGR00132">
    <property type="entry name" value="gatA"/>
    <property type="match status" value="1"/>
</dbReference>
<dbReference type="PANTHER" id="PTHR11895:SF151">
    <property type="entry name" value="GLUTAMYL-TRNA(GLN) AMIDOTRANSFERASE SUBUNIT A"/>
    <property type="match status" value="1"/>
</dbReference>
<dbReference type="PANTHER" id="PTHR11895">
    <property type="entry name" value="TRANSAMIDASE"/>
    <property type="match status" value="1"/>
</dbReference>
<dbReference type="Pfam" id="PF01425">
    <property type="entry name" value="Amidase"/>
    <property type="match status" value="1"/>
</dbReference>
<dbReference type="SUPFAM" id="SSF75304">
    <property type="entry name" value="Amidase signature (AS) enzymes"/>
    <property type="match status" value="1"/>
</dbReference>
<dbReference type="PROSITE" id="PS00571">
    <property type="entry name" value="AMIDASES"/>
    <property type="match status" value="1"/>
</dbReference>